<reference key="1">
    <citation type="journal article" date="2000" name="Nature">
        <title>The genome sequence of the thermoacidophilic scavenger Thermoplasma acidophilum.</title>
        <authorList>
            <person name="Ruepp A."/>
            <person name="Graml W."/>
            <person name="Santos-Martinez M.-L."/>
            <person name="Koretke K.K."/>
            <person name="Volker C."/>
            <person name="Mewes H.-W."/>
            <person name="Frishman D."/>
            <person name="Stocker S."/>
            <person name="Lupas A.N."/>
            <person name="Baumeister W."/>
        </authorList>
    </citation>
    <scope>NUCLEOTIDE SEQUENCE [LARGE SCALE GENOMIC DNA]</scope>
    <source>
        <strain>ATCC 25905 / DSM 1728 / JCM 9062 / NBRC 15155 / AMRC-C165</strain>
    </source>
</reference>
<keyword id="KW-0238">DNA-binding</keyword>
<keyword id="KW-1185">Reference proteome</keyword>
<keyword id="KW-0804">Transcription</keyword>
<keyword id="KW-0805">Transcription regulation</keyword>
<dbReference type="EMBL" id="AL445067">
    <property type="protein sequence ID" value="CAC12484.1"/>
    <property type="molecule type" value="Genomic_DNA"/>
</dbReference>
<dbReference type="RefSeq" id="WP_010901770.1">
    <property type="nucleotide sequence ID" value="NC_002578.1"/>
</dbReference>
<dbReference type="SMR" id="Q9HIH6"/>
<dbReference type="FunCoup" id="Q9HIH6">
    <property type="interactions" value="1"/>
</dbReference>
<dbReference type="STRING" id="273075.gene:9572590"/>
<dbReference type="PaxDb" id="273075-Ta1363"/>
<dbReference type="EnsemblBacteria" id="CAC12484">
    <property type="protein sequence ID" value="CAC12484"/>
    <property type="gene ID" value="CAC12484"/>
</dbReference>
<dbReference type="KEGG" id="tac:Ta1363"/>
<dbReference type="eggNOG" id="arCOG04152">
    <property type="taxonomic scope" value="Archaea"/>
</dbReference>
<dbReference type="HOGENOM" id="CLU_075726_0_0_2"/>
<dbReference type="InParanoid" id="Q9HIH6"/>
<dbReference type="OrthoDB" id="31424at2157"/>
<dbReference type="Proteomes" id="UP000001024">
    <property type="component" value="Chromosome"/>
</dbReference>
<dbReference type="GO" id="GO:0003677">
    <property type="term" value="F:DNA binding"/>
    <property type="evidence" value="ECO:0007669"/>
    <property type="project" value="UniProtKB-KW"/>
</dbReference>
<dbReference type="GO" id="GO:0003700">
    <property type="term" value="F:DNA-binding transcription factor activity"/>
    <property type="evidence" value="ECO:0007669"/>
    <property type="project" value="UniProtKB-UniRule"/>
</dbReference>
<dbReference type="CDD" id="cd00093">
    <property type="entry name" value="HTH_XRE"/>
    <property type="match status" value="1"/>
</dbReference>
<dbReference type="Gene3D" id="1.10.260.40">
    <property type="entry name" value="lambda repressor-like DNA-binding domains"/>
    <property type="match status" value="1"/>
</dbReference>
<dbReference type="HAMAP" id="MF_00584">
    <property type="entry name" value="HTH_type_cro_C1"/>
    <property type="match status" value="1"/>
</dbReference>
<dbReference type="InterPro" id="IPR020886">
    <property type="entry name" value="Arc_TR_HTH"/>
</dbReference>
<dbReference type="InterPro" id="IPR001387">
    <property type="entry name" value="Cro/C1-type_HTH"/>
</dbReference>
<dbReference type="InterPro" id="IPR010982">
    <property type="entry name" value="Lambda_DNA-bd_dom_sf"/>
</dbReference>
<dbReference type="NCBIfam" id="NF003162">
    <property type="entry name" value="PRK04140.1"/>
    <property type="match status" value="1"/>
</dbReference>
<dbReference type="Pfam" id="PF01381">
    <property type="entry name" value="HTH_3"/>
    <property type="match status" value="1"/>
</dbReference>
<dbReference type="SMART" id="SM00530">
    <property type="entry name" value="HTH_XRE"/>
    <property type="match status" value="1"/>
</dbReference>
<dbReference type="SUPFAM" id="SSF47413">
    <property type="entry name" value="lambda repressor-like DNA-binding domains"/>
    <property type="match status" value="1"/>
</dbReference>
<dbReference type="PROSITE" id="PS50943">
    <property type="entry name" value="HTH_CROC1"/>
    <property type="match status" value="1"/>
</dbReference>
<feature type="chain" id="PRO_0000144868" description="Putative HTH-type transcriptional regulatory protein Ta1363">
    <location>
        <begin position="1"/>
        <end position="312"/>
    </location>
</feature>
<feature type="domain" description="HTH cro/C1-type" evidence="1">
    <location>
        <begin position="133"/>
        <end position="186"/>
    </location>
</feature>
<feature type="DNA-binding region" description="H-T-H motif" evidence="1">
    <location>
        <begin position="144"/>
        <end position="163"/>
    </location>
</feature>
<name>Y1363_THEAC</name>
<accession>Q9HIH6</accession>
<evidence type="ECO:0000255" key="1">
    <source>
        <dbReference type="HAMAP-Rule" id="MF_00584"/>
    </source>
</evidence>
<organism>
    <name type="scientific">Thermoplasma acidophilum (strain ATCC 25905 / DSM 1728 / JCM 9062 / NBRC 15155 / AMRC-C165)</name>
    <dbReference type="NCBI Taxonomy" id="273075"/>
    <lineage>
        <taxon>Archaea</taxon>
        <taxon>Methanobacteriati</taxon>
        <taxon>Thermoplasmatota</taxon>
        <taxon>Thermoplasmata</taxon>
        <taxon>Thermoplasmatales</taxon>
        <taxon>Thermoplasmataceae</taxon>
        <taxon>Thermoplasma</taxon>
    </lineage>
</organism>
<proteinExistence type="inferred from homology"/>
<protein>
    <recommendedName>
        <fullName evidence="1">Putative HTH-type transcriptional regulatory protein Ta1363</fullName>
    </recommendedName>
</protein>
<sequence>MEDKKDALISKTISMLLDNGFAVADISGQFSASFDIIARRNIERYVLKVLYNIDTLKPTTAYQLAKVAKFLRSTATIVGEKAGGGPLEDGVIYYRHGIPISSLDTFRDYINGEKPYIYSGPGGFYVKINGEALREMRMKMSLSIGYLSHYLGVSRRSVSLYENGSSATIDVFLKLQEIIKSDLVDHTDLFKIIPDNFQEEERVDDVYIQMLLDILERIGLDTKPAYRMPFDILARDEEVVSLIASLLSEEADKTKIEIMKKISSVLEDDAFLISKHSTTRENINGCPVINIVDLEKMTSKDELLRMLEKRAR</sequence>
<gene>
    <name type="ordered locus">Ta1363</name>
</gene>